<protein>
    <recommendedName>
        <fullName evidence="1">Large ribosomal subunit protein uL24</fullName>
    </recommendedName>
    <alternativeName>
        <fullName evidence="2">50S ribosomal protein L24</fullName>
    </alternativeName>
</protein>
<name>RL24_UREPA</name>
<reference key="1">
    <citation type="journal article" date="2000" name="Nature">
        <title>The complete sequence of the mucosal pathogen Ureaplasma urealyticum.</title>
        <authorList>
            <person name="Glass J.I."/>
            <person name="Lefkowitz E.J."/>
            <person name="Glass J.S."/>
            <person name="Heiner C.R."/>
            <person name="Chen E.Y."/>
            <person name="Cassell G.H."/>
        </authorList>
    </citation>
    <scope>NUCLEOTIDE SEQUENCE [LARGE SCALE GENOMIC DNA]</scope>
    <source>
        <strain>ATCC 700970</strain>
    </source>
</reference>
<organism>
    <name type="scientific">Ureaplasma parvum serovar 3 (strain ATCC 700970)</name>
    <dbReference type="NCBI Taxonomy" id="273119"/>
    <lineage>
        <taxon>Bacteria</taxon>
        <taxon>Bacillati</taxon>
        <taxon>Mycoplasmatota</taxon>
        <taxon>Mycoplasmoidales</taxon>
        <taxon>Mycoplasmoidaceae</taxon>
        <taxon>Ureaplasma</taxon>
    </lineage>
</organism>
<keyword id="KW-1185">Reference proteome</keyword>
<keyword id="KW-0687">Ribonucleoprotein</keyword>
<keyword id="KW-0689">Ribosomal protein</keyword>
<keyword id="KW-0694">RNA-binding</keyword>
<keyword id="KW-0699">rRNA-binding</keyword>
<accession>Q9PQP9</accession>
<proteinExistence type="inferred from homology"/>
<feature type="chain" id="PRO_0000130747" description="Large ribosomal subunit protein uL24">
    <location>
        <begin position="1"/>
        <end position="110"/>
    </location>
</feature>
<gene>
    <name evidence="1" type="primary">rplX</name>
    <name evidence="1" type="synonym">rpl24</name>
    <name type="ordered locus">UU242</name>
</gene>
<comment type="function">
    <text evidence="1">One of two assembly initiator proteins, it binds directly to the 5'-end of the 23S rRNA, where it nucleates assembly of the 50S subunit.</text>
</comment>
<comment type="function">
    <text evidence="1">One of the proteins that surrounds the polypeptide exit tunnel on the outside of the subunit.</text>
</comment>
<comment type="subunit">
    <text evidence="1">Part of the 50S ribosomal subunit.</text>
</comment>
<comment type="similarity">
    <text evidence="1">Belongs to the universal ribosomal protein uL24 family.</text>
</comment>
<sequence length="110" mass="12267">MNRIKKGDTVVVISGKNKNKSGVVIQVNPKEQTALVEGVNKIKRHQKKDQTHEQSGIIEKEAPIRLCKLALVDPKGKDKGKATKVKYLLKDNKKVRVARKSGSELDVNKK</sequence>
<evidence type="ECO:0000255" key="1">
    <source>
        <dbReference type="HAMAP-Rule" id="MF_01326"/>
    </source>
</evidence>
<evidence type="ECO:0000305" key="2"/>
<dbReference type="EMBL" id="AF222894">
    <property type="protein sequence ID" value="AAF30651.1"/>
    <property type="molecule type" value="Genomic_DNA"/>
</dbReference>
<dbReference type="RefSeq" id="WP_006688875.1">
    <property type="nucleotide sequence ID" value="NC_002162.1"/>
</dbReference>
<dbReference type="SMR" id="Q9PQP9"/>
<dbReference type="STRING" id="273119.UU242"/>
<dbReference type="EnsemblBacteria" id="AAF30651">
    <property type="protein sequence ID" value="AAF30651"/>
    <property type="gene ID" value="UU242"/>
</dbReference>
<dbReference type="GeneID" id="29672578"/>
<dbReference type="KEGG" id="uur:UU242"/>
<dbReference type="eggNOG" id="COG0198">
    <property type="taxonomic scope" value="Bacteria"/>
</dbReference>
<dbReference type="HOGENOM" id="CLU_093315_2_3_14"/>
<dbReference type="OrthoDB" id="9807419at2"/>
<dbReference type="Proteomes" id="UP000000423">
    <property type="component" value="Chromosome"/>
</dbReference>
<dbReference type="GO" id="GO:1990904">
    <property type="term" value="C:ribonucleoprotein complex"/>
    <property type="evidence" value="ECO:0007669"/>
    <property type="project" value="UniProtKB-KW"/>
</dbReference>
<dbReference type="GO" id="GO:0005840">
    <property type="term" value="C:ribosome"/>
    <property type="evidence" value="ECO:0007669"/>
    <property type="project" value="UniProtKB-KW"/>
</dbReference>
<dbReference type="GO" id="GO:0019843">
    <property type="term" value="F:rRNA binding"/>
    <property type="evidence" value="ECO:0007669"/>
    <property type="project" value="UniProtKB-UniRule"/>
</dbReference>
<dbReference type="GO" id="GO:0003735">
    <property type="term" value="F:structural constituent of ribosome"/>
    <property type="evidence" value="ECO:0007669"/>
    <property type="project" value="InterPro"/>
</dbReference>
<dbReference type="GO" id="GO:0006412">
    <property type="term" value="P:translation"/>
    <property type="evidence" value="ECO:0007669"/>
    <property type="project" value="UniProtKB-UniRule"/>
</dbReference>
<dbReference type="CDD" id="cd06089">
    <property type="entry name" value="KOW_RPL26"/>
    <property type="match status" value="1"/>
</dbReference>
<dbReference type="Gene3D" id="2.30.30.30">
    <property type="match status" value="1"/>
</dbReference>
<dbReference type="HAMAP" id="MF_01326_B">
    <property type="entry name" value="Ribosomal_uL24_B"/>
    <property type="match status" value="1"/>
</dbReference>
<dbReference type="InterPro" id="IPR005824">
    <property type="entry name" value="KOW"/>
</dbReference>
<dbReference type="InterPro" id="IPR014722">
    <property type="entry name" value="Rib_uL2_dom2"/>
</dbReference>
<dbReference type="InterPro" id="IPR003256">
    <property type="entry name" value="Ribosomal_uL24"/>
</dbReference>
<dbReference type="InterPro" id="IPR005825">
    <property type="entry name" value="Ribosomal_uL24_CS"/>
</dbReference>
<dbReference type="InterPro" id="IPR041988">
    <property type="entry name" value="Ribosomal_uL24_KOW"/>
</dbReference>
<dbReference type="InterPro" id="IPR008991">
    <property type="entry name" value="Translation_prot_SH3-like_sf"/>
</dbReference>
<dbReference type="NCBIfam" id="TIGR01079">
    <property type="entry name" value="rplX_bact"/>
    <property type="match status" value="1"/>
</dbReference>
<dbReference type="PANTHER" id="PTHR12903">
    <property type="entry name" value="MITOCHONDRIAL RIBOSOMAL PROTEIN L24"/>
    <property type="match status" value="1"/>
</dbReference>
<dbReference type="Pfam" id="PF00467">
    <property type="entry name" value="KOW"/>
    <property type="match status" value="1"/>
</dbReference>
<dbReference type="Pfam" id="PF17136">
    <property type="entry name" value="ribosomal_L24"/>
    <property type="match status" value="1"/>
</dbReference>
<dbReference type="SMART" id="SM00739">
    <property type="entry name" value="KOW"/>
    <property type="match status" value="1"/>
</dbReference>
<dbReference type="SUPFAM" id="SSF50104">
    <property type="entry name" value="Translation proteins SH3-like domain"/>
    <property type="match status" value="1"/>
</dbReference>
<dbReference type="PROSITE" id="PS01108">
    <property type="entry name" value="RIBOSOMAL_L24"/>
    <property type="match status" value="1"/>
</dbReference>